<comment type="function">
    <text evidence="1 6 7 8">The PI(3,5)P2 regulatory complex regulates both the synthesis and turnover of phosphatidylinositol 3,5-bisphosphate (PtdIns(3,5)P2). Catalyzes the phosphorylation of phosphatidylinositol 3-phosphate on the fifth hydroxyl of the myo-inositol ring, to form phosphatidylinositol 3,5-bisphosphate (By similarity). Plays an important role in maintenance of endomembrane homeostasis including endocytosis, vacuole formation, and vacuolar acidification processes. Required for development of viable pollen. Might mediate recycling of auxin transporters.</text>
</comment>
<comment type="catalytic activity">
    <reaction evidence="9">
        <text>a 1,2-diacyl-sn-glycero-3-phospho-(1D-myo-inositol-3-phosphate) + ATP = a 1,2-diacyl-sn-glycero-3-phospho-(1D-myo-inositol-3,5-bisphosphate) + ADP + H(+)</text>
        <dbReference type="Rhea" id="RHEA:13609"/>
        <dbReference type="ChEBI" id="CHEBI:15378"/>
        <dbReference type="ChEBI" id="CHEBI:30616"/>
        <dbReference type="ChEBI" id="CHEBI:57923"/>
        <dbReference type="ChEBI" id="CHEBI:58088"/>
        <dbReference type="ChEBI" id="CHEBI:456216"/>
        <dbReference type="EC" id="2.7.1.150"/>
    </reaction>
    <physiologicalReaction direction="left-to-right" evidence="9">
        <dbReference type="Rhea" id="RHEA:13610"/>
    </physiologicalReaction>
</comment>
<comment type="cofactor">
    <cofactor evidence="1">
        <name>Mg(2+)</name>
        <dbReference type="ChEBI" id="CHEBI:18420"/>
    </cofactor>
    <cofactor evidence="1">
        <name>Mn(2+)</name>
        <dbReference type="ChEBI" id="CHEBI:29035"/>
    </cofactor>
</comment>
<comment type="subunit">
    <text evidence="1">Component of the PI(3,5)P2 regulatory complex at least composed of ATG18, SAC/FIG4, FAB1 and VAC14.</text>
</comment>
<comment type="subcellular location">
    <subcellularLocation>
        <location evidence="7">Endosome membrane</location>
        <topology evidence="7">Peripheral membrane protein</topology>
    </subcellularLocation>
</comment>
<comment type="tissue specificity">
    <text evidence="6">Ubiquitous with highest expression levels in the root hair zone, pollen, and stamens.</text>
</comment>
<comment type="disruption phenotype">
    <text evidence="6 7 8">Leaf-curling phenotype. Root growth inhibition, root gravitropic response, and hyposensitivity to exogenous auxin. Fab1a and fab1b double mutant displays an abnormal vacuolar phenotype late in pollen development leading to inviable pollen (PubMed:19846542).</text>
</comment>
<organism>
    <name type="scientific">Arabidopsis thaliana</name>
    <name type="common">Mouse-ear cress</name>
    <dbReference type="NCBI Taxonomy" id="3702"/>
    <lineage>
        <taxon>Eukaryota</taxon>
        <taxon>Viridiplantae</taxon>
        <taxon>Streptophyta</taxon>
        <taxon>Embryophyta</taxon>
        <taxon>Tracheophyta</taxon>
        <taxon>Spermatophyta</taxon>
        <taxon>Magnoliopsida</taxon>
        <taxon>eudicotyledons</taxon>
        <taxon>Gunneridae</taxon>
        <taxon>Pentapetalae</taxon>
        <taxon>rosids</taxon>
        <taxon>malvids</taxon>
        <taxon>Brassicales</taxon>
        <taxon>Brassicaceae</taxon>
        <taxon>Camelineae</taxon>
        <taxon>Arabidopsis</taxon>
    </lineage>
</organism>
<proteinExistence type="evidence at protein level"/>
<feature type="chain" id="PRO_0000421871" description="1-phosphatidylinositol-3-phosphate 5-kinase FAB1B">
    <location>
        <begin position="1"/>
        <end position="1791"/>
    </location>
</feature>
<feature type="domain" description="PIPK" evidence="4">
    <location>
        <begin position="1433"/>
        <end position="1758"/>
    </location>
</feature>
<feature type="zinc finger region" description="FYVE-type" evidence="3">
    <location>
        <begin position="39"/>
        <end position="105"/>
    </location>
</feature>
<feature type="region of interest" description="Disordered" evidence="5">
    <location>
        <begin position="166"/>
        <end position="186"/>
    </location>
</feature>
<feature type="region of interest" description="Disordered" evidence="5">
    <location>
        <begin position="279"/>
        <end position="370"/>
    </location>
</feature>
<feature type="region of interest" description="Disordered" evidence="5">
    <location>
        <begin position="770"/>
        <end position="790"/>
    </location>
</feature>
<feature type="region of interest" description="Disordered" evidence="5">
    <location>
        <begin position="834"/>
        <end position="859"/>
    </location>
</feature>
<feature type="region of interest" description="Disordered" evidence="5">
    <location>
        <begin position="1151"/>
        <end position="1242"/>
    </location>
</feature>
<feature type="region of interest" description="Disordered" evidence="5">
    <location>
        <begin position="1769"/>
        <end position="1791"/>
    </location>
</feature>
<feature type="coiled-coil region" evidence="2">
    <location>
        <begin position="1077"/>
        <end position="1111"/>
    </location>
</feature>
<feature type="compositionally biased region" description="Basic and acidic residues" evidence="5">
    <location>
        <begin position="279"/>
        <end position="293"/>
    </location>
</feature>
<feature type="compositionally biased region" description="Acidic residues" evidence="5">
    <location>
        <begin position="324"/>
        <end position="345"/>
    </location>
</feature>
<feature type="compositionally biased region" description="Basic and acidic residues" evidence="5">
    <location>
        <begin position="838"/>
        <end position="850"/>
    </location>
</feature>
<feature type="compositionally biased region" description="Basic and acidic residues" evidence="5">
    <location>
        <begin position="1151"/>
        <end position="1164"/>
    </location>
</feature>
<feature type="compositionally biased region" description="Polar residues" evidence="5">
    <location>
        <begin position="1167"/>
        <end position="1188"/>
    </location>
</feature>
<feature type="compositionally biased region" description="Polar residues" evidence="5">
    <location>
        <begin position="1196"/>
        <end position="1206"/>
    </location>
</feature>
<feature type="compositionally biased region" description="Polar residues" evidence="5">
    <location>
        <begin position="1771"/>
        <end position="1791"/>
    </location>
</feature>
<feature type="binding site" evidence="3">
    <location>
        <position position="45"/>
    </location>
    <ligand>
        <name>Zn(2+)</name>
        <dbReference type="ChEBI" id="CHEBI:29105"/>
        <label>1</label>
    </ligand>
</feature>
<feature type="binding site" evidence="3">
    <location>
        <position position="48"/>
    </location>
    <ligand>
        <name>Zn(2+)</name>
        <dbReference type="ChEBI" id="CHEBI:29105"/>
        <label>1</label>
    </ligand>
</feature>
<feature type="binding site" evidence="3">
    <location>
        <position position="61"/>
    </location>
    <ligand>
        <name>Zn(2+)</name>
        <dbReference type="ChEBI" id="CHEBI:29105"/>
        <label>2</label>
    </ligand>
</feature>
<feature type="binding site" evidence="3">
    <location>
        <position position="64"/>
    </location>
    <ligand>
        <name>Zn(2+)</name>
        <dbReference type="ChEBI" id="CHEBI:29105"/>
        <label>2</label>
    </ligand>
</feature>
<feature type="binding site" evidence="3">
    <location>
        <position position="69"/>
    </location>
    <ligand>
        <name>Zn(2+)</name>
        <dbReference type="ChEBI" id="CHEBI:29105"/>
        <label>1</label>
    </ligand>
</feature>
<feature type="binding site" evidence="3">
    <location>
        <position position="72"/>
    </location>
    <ligand>
        <name>Zn(2+)</name>
        <dbReference type="ChEBI" id="CHEBI:29105"/>
        <label>1</label>
    </ligand>
</feature>
<feature type="binding site" evidence="3">
    <location>
        <position position="97"/>
    </location>
    <ligand>
        <name>Zn(2+)</name>
        <dbReference type="ChEBI" id="CHEBI:29105"/>
        <label>2</label>
    </ligand>
</feature>
<feature type="binding site" evidence="3">
    <location>
        <position position="100"/>
    </location>
    <ligand>
        <name>Zn(2+)</name>
        <dbReference type="ChEBI" id="CHEBI:29105"/>
        <label>2</label>
    </ligand>
</feature>
<reference key="1">
    <citation type="journal article" date="2000" name="DNA Res.">
        <title>Structural analysis of Arabidopsis thaliana chromosome 3. I. Sequence features of the regions of 4,504,864 bp covered by sixty P1 and TAC clones.</title>
        <authorList>
            <person name="Sato S."/>
            <person name="Nakamura Y."/>
            <person name="Kaneko T."/>
            <person name="Katoh T."/>
            <person name="Asamizu E."/>
            <person name="Tabata S."/>
        </authorList>
    </citation>
    <scope>NUCLEOTIDE SEQUENCE [LARGE SCALE GENOMIC DNA]</scope>
    <source>
        <strain>cv. Columbia</strain>
    </source>
</reference>
<reference key="2">
    <citation type="journal article" date="2017" name="Plant J.">
        <title>Araport11: a complete reannotation of the Arabidopsis thaliana reference genome.</title>
        <authorList>
            <person name="Cheng C.Y."/>
            <person name="Krishnakumar V."/>
            <person name="Chan A.P."/>
            <person name="Thibaud-Nissen F."/>
            <person name="Schobel S."/>
            <person name="Town C.D."/>
        </authorList>
    </citation>
    <scope>GENOME REANNOTATION</scope>
    <source>
        <strain>cv. Columbia</strain>
    </source>
</reference>
<reference key="3">
    <citation type="submission" date="2006-07" db="EMBL/GenBank/DDBJ databases">
        <title>Large-scale analysis of RIKEN Arabidopsis full-length (RAFL) cDNAs.</title>
        <authorList>
            <person name="Totoki Y."/>
            <person name="Seki M."/>
            <person name="Ishida J."/>
            <person name="Nakajima M."/>
            <person name="Enju A."/>
            <person name="Kamiya A."/>
            <person name="Narusaka M."/>
            <person name="Shin-i T."/>
            <person name="Nakagawa M."/>
            <person name="Sakamoto N."/>
            <person name="Oishi K."/>
            <person name="Kohara Y."/>
            <person name="Kobayashi M."/>
            <person name="Toyoda A."/>
            <person name="Sakaki Y."/>
            <person name="Sakurai T."/>
            <person name="Iida K."/>
            <person name="Akiyama K."/>
            <person name="Satou M."/>
            <person name="Toyoda T."/>
            <person name="Konagaya A."/>
            <person name="Carninci P."/>
            <person name="Kawai J."/>
            <person name="Hayashizaki Y."/>
            <person name="Shinozaki K."/>
        </authorList>
    </citation>
    <scope>NUCLEOTIDE SEQUENCE [LARGE SCALE MRNA] OF 1-845</scope>
    <source>
        <strain>cv. Columbia</strain>
    </source>
</reference>
<reference key="4">
    <citation type="journal article" date="2002" name="Plant Physiol.">
        <title>Inositol phospholipid metabolism in Arabidopsis. Characterized and putative isoforms of inositol phospholipid kinase and phosphoinositide-specific phospholipase C.</title>
        <authorList>
            <person name="Mueller-Roeber B."/>
            <person name="Pical C."/>
        </authorList>
    </citation>
    <scope>GENE FAMILY</scope>
    <scope>REVIEW</scope>
</reference>
<reference key="5">
    <citation type="journal article" date="2009" name="Plant Physiol.">
        <title>Arabidopsis FAB1/PIKfyve proteins are essential for development of viable pollen.</title>
        <authorList>
            <person name="Whitley P."/>
            <person name="Hinz S."/>
            <person name="Doughty J."/>
        </authorList>
    </citation>
    <scope>FUNCTION</scope>
    <scope>DISRUPTION PHENOTYPE</scope>
    <scope>TISSUE SPECIFICITY</scope>
</reference>
<reference key="6">
    <citation type="journal article" date="2011" name="Plant Physiol.">
        <title>Loss-of-function and gain-of-function mutations in FAB1A/B impair endomembrane homeostasis, conferring pleiotropic developmental abnormalities in Arabidopsis.</title>
        <authorList>
            <person name="Hirano T."/>
            <person name="Matsuzawa T."/>
            <person name="Takegawa K."/>
            <person name="Sato M.H."/>
        </authorList>
    </citation>
    <scope>FUNCTION</scope>
    <scope>CATALYTIC ACTIVITY</scope>
    <scope>DISRUPTION PHENOTYPE</scope>
    <scope>SUBCELLULAR LOCATION</scope>
</reference>
<reference key="7">
    <citation type="journal article" date="2011" name="Plant Signal. Behav.">
        <title>Arabidopsis FAB1A/B is possibly involved in the recycling of auxin transporters.</title>
        <authorList>
            <person name="Hirano T."/>
            <person name="Sato M.H."/>
        </authorList>
    </citation>
    <scope>FUNCTION</scope>
    <scope>DISRUPTION PHENOTYPE</scope>
</reference>
<dbReference type="EC" id="2.7.1.150" evidence="9"/>
<dbReference type="EMBL" id="AB022220">
    <property type="protein sequence ID" value="BAB01033.1"/>
    <property type="molecule type" value="Genomic_DNA"/>
</dbReference>
<dbReference type="EMBL" id="CP002686">
    <property type="protein sequence ID" value="AEE75496.1"/>
    <property type="molecule type" value="Genomic_DNA"/>
</dbReference>
<dbReference type="EMBL" id="CP002686">
    <property type="protein sequence ID" value="ANM65157.1"/>
    <property type="molecule type" value="Genomic_DNA"/>
</dbReference>
<dbReference type="EMBL" id="AK228922">
    <property type="protein sequence ID" value="BAF00811.1"/>
    <property type="molecule type" value="mRNA"/>
</dbReference>
<dbReference type="RefSeq" id="NP_001319548.1">
    <property type="nucleotide sequence ID" value="NM_001338116.1"/>
</dbReference>
<dbReference type="RefSeq" id="NP_188044.1">
    <property type="nucleotide sequence ID" value="NM_112285.4"/>
</dbReference>
<dbReference type="SMR" id="Q9LUM0"/>
<dbReference type="FunCoup" id="Q9LUM0">
    <property type="interactions" value="3646"/>
</dbReference>
<dbReference type="STRING" id="3702.Q9LUM0"/>
<dbReference type="iPTMnet" id="Q9LUM0"/>
<dbReference type="PaxDb" id="3702-AT3G14270.1"/>
<dbReference type="ProteomicsDB" id="230632"/>
<dbReference type="EnsemblPlants" id="AT3G14270.1">
    <property type="protein sequence ID" value="AT3G14270.1"/>
    <property type="gene ID" value="AT3G14270"/>
</dbReference>
<dbReference type="EnsemblPlants" id="AT3G14270.2">
    <property type="protein sequence ID" value="AT3G14270.2"/>
    <property type="gene ID" value="AT3G14270"/>
</dbReference>
<dbReference type="GeneID" id="820647"/>
<dbReference type="Gramene" id="AT3G14270.1">
    <property type="protein sequence ID" value="AT3G14270.1"/>
    <property type="gene ID" value="AT3G14270"/>
</dbReference>
<dbReference type="Gramene" id="AT3G14270.2">
    <property type="protein sequence ID" value="AT3G14270.2"/>
    <property type="gene ID" value="AT3G14270"/>
</dbReference>
<dbReference type="KEGG" id="ath:AT3G14270"/>
<dbReference type="Araport" id="AT3G14270"/>
<dbReference type="TAIR" id="AT3G14270">
    <property type="gene designation" value="FAB1B"/>
</dbReference>
<dbReference type="eggNOG" id="KOG0230">
    <property type="taxonomic scope" value="Eukaryota"/>
</dbReference>
<dbReference type="HOGENOM" id="CLU_000480_4_0_1"/>
<dbReference type="InParanoid" id="Q9LUM0"/>
<dbReference type="OMA" id="QSVWNDT"/>
<dbReference type="PhylomeDB" id="Q9LUM0"/>
<dbReference type="BioCyc" id="ARA:AT3G14270-MONOMER"/>
<dbReference type="BRENDA" id="2.7.1.150">
    <property type="organism ID" value="399"/>
</dbReference>
<dbReference type="PRO" id="PR:Q9LUM0"/>
<dbReference type="Proteomes" id="UP000006548">
    <property type="component" value="Chromosome 3"/>
</dbReference>
<dbReference type="ExpressionAtlas" id="Q9LUM0">
    <property type="expression patterns" value="baseline and differential"/>
</dbReference>
<dbReference type="GO" id="GO:0005768">
    <property type="term" value="C:endosome"/>
    <property type="evidence" value="ECO:0000314"/>
    <property type="project" value="TAIR"/>
</dbReference>
<dbReference type="GO" id="GO:0010008">
    <property type="term" value="C:endosome membrane"/>
    <property type="evidence" value="ECO:0007669"/>
    <property type="project" value="UniProtKB-SubCell"/>
</dbReference>
<dbReference type="GO" id="GO:0005739">
    <property type="term" value="C:mitochondrion"/>
    <property type="evidence" value="ECO:0007005"/>
    <property type="project" value="TAIR"/>
</dbReference>
<dbReference type="GO" id="GO:0000285">
    <property type="term" value="F:1-phosphatidylinositol-3-phosphate 5-kinase activity"/>
    <property type="evidence" value="ECO:0000316"/>
    <property type="project" value="TAIR"/>
</dbReference>
<dbReference type="GO" id="GO:0005524">
    <property type="term" value="F:ATP binding"/>
    <property type="evidence" value="ECO:0007669"/>
    <property type="project" value="UniProtKB-KW"/>
</dbReference>
<dbReference type="GO" id="GO:0008270">
    <property type="term" value="F:zinc ion binding"/>
    <property type="evidence" value="ECO:0007669"/>
    <property type="project" value="UniProtKB-KW"/>
</dbReference>
<dbReference type="GO" id="GO:0010256">
    <property type="term" value="P:endomembrane system organization"/>
    <property type="evidence" value="ECO:0000316"/>
    <property type="project" value="TAIR"/>
</dbReference>
<dbReference type="GO" id="GO:0046488">
    <property type="term" value="P:phosphatidylinositol metabolic process"/>
    <property type="evidence" value="ECO:0007669"/>
    <property type="project" value="InterPro"/>
</dbReference>
<dbReference type="GO" id="GO:0009555">
    <property type="term" value="P:pollen development"/>
    <property type="evidence" value="ECO:0000316"/>
    <property type="project" value="TAIR"/>
</dbReference>
<dbReference type="GO" id="GO:0090332">
    <property type="term" value="P:stomatal closure"/>
    <property type="evidence" value="ECO:0000315"/>
    <property type="project" value="TAIR"/>
</dbReference>
<dbReference type="GO" id="GO:0007033">
    <property type="term" value="P:vacuole organization"/>
    <property type="evidence" value="ECO:0000316"/>
    <property type="project" value="TAIR"/>
</dbReference>
<dbReference type="CDD" id="cd03334">
    <property type="entry name" value="Fab1_TCP"/>
    <property type="match status" value="1"/>
</dbReference>
<dbReference type="CDD" id="cd17300">
    <property type="entry name" value="PIPKc_PIKfyve"/>
    <property type="match status" value="1"/>
</dbReference>
<dbReference type="FunFam" id="3.30.810.10:FF:000001">
    <property type="entry name" value="1-phosphatidylinositol 3-phosphate 5-kinase FAB1"/>
    <property type="match status" value="1"/>
</dbReference>
<dbReference type="FunFam" id="3.50.7.10:FF:000007">
    <property type="entry name" value="1-phosphatidylinositol 3-phosphate 5-kinase isoform X1"/>
    <property type="match status" value="1"/>
</dbReference>
<dbReference type="FunFam" id="3.30.40.10:FF:000384">
    <property type="entry name" value="1-phosphatidylinositol-3-phosphate 5-kinase FAB1B"/>
    <property type="match status" value="1"/>
</dbReference>
<dbReference type="FunFam" id="3.30.800.10:FF:000006">
    <property type="entry name" value="1-phosphatidylinositol-3-phosphate 5-kinase FAB1B"/>
    <property type="match status" value="1"/>
</dbReference>
<dbReference type="Gene3D" id="3.30.810.10">
    <property type="entry name" value="2-Layer Sandwich"/>
    <property type="match status" value="1"/>
</dbReference>
<dbReference type="Gene3D" id="3.50.7.10">
    <property type="entry name" value="GroEL"/>
    <property type="match status" value="1"/>
</dbReference>
<dbReference type="Gene3D" id="3.30.800.10">
    <property type="entry name" value="Phosphatidylinositol Phosphate Kinase II Beta"/>
    <property type="match status" value="1"/>
</dbReference>
<dbReference type="Gene3D" id="3.30.40.10">
    <property type="entry name" value="Zinc/RING finger domain, C3HC4 (zinc finger)"/>
    <property type="match status" value="1"/>
</dbReference>
<dbReference type="InterPro" id="IPR002423">
    <property type="entry name" value="Cpn60/GroEL/TCP-1"/>
</dbReference>
<dbReference type="InterPro" id="IPR027409">
    <property type="entry name" value="GroEL-like_apical_dom_sf"/>
</dbReference>
<dbReference type="InterPro" id="IPR044769">
    <property type="entry name" value="PIKfyve_PIPKc"/>
</dbReference>
<dbReference type="InterPro" id="IPR027483">
    <property type="entry name" value="PInositol-4-P-4/5-kinase_C_sf"/>
</dbReference>
<dbReference type="InterPro" id="IPR002498">
    <property type="entry name" value="PInositol-4-P-4/5-kinase_core"/>
</dbReference>
<dbReference type="InterPro" id="IPR027484">
    <property type="entry name" value="PInositol-4-P-5-kinase_N"/>
</dbReference>
<dbReference type="InterPro" id="IPR000306">
    <property type="entry name" value="Znf_FYVE"/>
</dbReference>
<dbReference type="InterPro" id="IPR017455">
    <property type="entry name" value="Znf_FYVE-rel"/>
</dbReference>
<dbReference type="InterPro" id="IPR011011">
    <property type="entry name" value="Znf_FYVE_PHD"/>
</dbReference>
<dbReference type="InterPro" id="IPR013083">
    <property type="entry name" value="Znf_RING/FYVE/PHD"/>
</dbReference>
<dbReference type="PANTHER" id="PTHR45748">
    <property type="entry name" value="1-PHOSPHATIDYLINOSITOL 3-PHOSPHATE 5-KINASE-RELATED"/>
    <property type="match status" value="1"/>
</dbReference>
<dbReference type="PANTHER" id="PTHR45748:SF7">
    <property type="entry name" value="1-PHOSPHATIDYLINOSITOL 3-PHOSPHATE 5-KINASE-RELATED"/>
    <property type="match status" value="1"/>
</dbReference>
<dbReference type="Pfam" id="PF00118">
    <property type="entry name" value="Cpn60_TCP1"/>
    <property type="match status" value="1"/>
</dbReference>
<dbReference type="Pfam" id="PF01363">
    <property type="entry name" value="FYVE"/>
    <property type="match status" value="1"/>
</dbReference>
<dbReference type="Pfam" id="PF01504">
    <property type="entry name" value="PIP5K"/>
    <property type="match status" value="1"/>
</dbReference>
<dbReference type="SMART" id="SM00064">
    <property type="entry name" value="FYVE"/>
    <property type="match status" value="1"/>
</dbReference>
<dbReference type="SMART" id="SM00330">
    <property type="entry name" value="PIPKc"/>
    <property type="match status" value="1"/>
</dbReference>
<dbReference type="SUPFAM" id="SSF57903">
    <property type="entry name" value="FYVE/PHD zinc finger"/>
    <property type="match status" value="1"/>
</dbReference>
<dbReference type="SUPFAM" id="SSF52029">
    <property type="entry name" value="GroEL apical domain-like"/>
    <property type="match status" value="1"/>
</dbReference>
<dbReference type="SUPFAM" id="SSF56104">
    <property type="entry name" value="SAICAR synthase-like"/>
    <property type="match status" value="1"/>
</dbReference>
<dbReference type="PROSITE" id="PS51455">
    <property type="entry name" value="PIPK"/>
    <property type="match status" value="1"/>
</dbReference>
<dbReference type="PROSITE" id="PS50178">
    <property type="entry name" value="ZF_FYVE"/>
    <property type="match status" value="1"/>
</dbReference>
<protein>
    <recommendedName>
        <fullName>1-phosphatidylinositol-3-phosphate 5-kinase FAB1B</fullName>
        <shortName>Phosphatidylinositol 3-phosphate 5-kinase</shortName>
        <ecNumber evidence="9">2.7.1.150</ecNumber>
    </recommendedName>
    <alternativeName>
        <fullName>FYVE finger-containing phosphoinositide kinase</fullName>
    </alternativeName>
    <alternativeName>
        <fullName>PIKfyve</fullName>
    </alternativeName>
    <alternativeName>
        <fullName>Phosphatidylinositol 3-phosphate 5-kinase type III</fullName>
        <shortName>PIPkin-III</shortName>
        <shortName>Type III PIP kinase</shortName>
    </alternativeName>
    <alternativeName>
        <fullName>Protein FORMS APLOID AND BINUCLEATE CELLS 1B</fullName>
    </alternativeName>
</protein>
<gene>
    <name type="primary">FAB1B</name>
    <name type="ordered locus">At3g14270</name>
    <name type="ORF">MLN21.6</name>
</gene>
<sequence length="1791" mass="200831">MGTRDSNNRTFSEIVGLIKSWLPWRSEPATVSRDFWMPDQSCRVCYECDCQFTLINRRHHCRHCGRVFCGKCTANSIPFAPSDLRTPREDWERIRVCNYCFRQWEQGDGGPHVSNITELSTSPSETSLLSSKTSTTANSSSFALGSMPGLIGLNQRVHHGSDVSLHGVSSMETSVTKQGKETSRRSSFIATDVEDPSRFALNSIRSDDEYDEYGAYQTDIETSHSPRANEYYGPMEYNGMGIDDVPCKHLGGETADQKSLSGSPLIHQCLESLIREGSEQFQKKSEHDGRDECEASSPADISDDQVVEPVDFENNGLLWVPPEPENEEDERESALFDEEDNEGDASGEWGYLRPSTSFGSGEYRGEDRTTEEHKKAMKNVVDGHFRALLAQLLQVENISVSDEEGKESWLEIITSLSWEAANLLKPDMSKSGGMDPGGYVKVKCLASGFRHDSMVVKGVVCKKNVVNRRMSTKIEKARLLILGGGLEYQRVSNQLSSFDTLLQQEKDHLKMAVAKIHAERPNILLVEKSVSRFAQEYLLAKDISLVLNIKRPLLDRIARCTGAQIIPSVDHLSSQKLGYCENFRVDRYPEEHGSTGQVGKKVVKTLMYFEHCPKPLGFTILLRGANEDELKKVKHVVQYGVFAAYHLALETSFLADEGASPELPLNSPITVALPDKSTSIERSISTVPGFTVSTYEKSPTMLSCAEPQRANSVPVSELLSTTTNLSIQKDIPPIPYGSGWQAREINPSFVFSRHNISLNLPDRVIESRNSDLSGRSVPVDTPADKSNPIVVADETTNNSLHLSGQGFVRKSSQIGTSIMVENQDNGSELTIAQQQNNEKPKETQSQKEEFPPSPSDHQSILVSLSSRSVWKGTVCERSHLFRIKYYGSFDKPLGRFLRDHLFDQSYRCRSCEMPSEAHVHCYTHRQGSLTISVKKLQDYLLPGEKEGKIWMWHRCLRCPRLNGFPPATLRVVMSDAAWGLSFGKFLELSFSNHAAASRVACCGHSLHRDCLRFYGFGNMVACFRYATIDVHSVYLPPSILSFNYENQDWIQRETDEVIERAELLFSEVLNAISQIAEKGFRRRIGELEEVLQKEKAEFEENMQKILHREVNEGQPLVDILELYRIHRQLLFQSYMWDHRLINASTLHKLENSDDTKREENEKPPLAKSQTLPEMNAGTNSLLTGSEVNLNPDGDSTGDTGSLNNVQKEADTNSDLYQEKDDGGEVSPSKTLPDTSYPLENKVDVRRTQSDGQIVMKNLSATLDAAWIGERQTSVEIPTNNKVSLPPSTMSNSSTFPPISEGLMPIDLPEQQNEFKVAYPVSPALPSKNYENSEDSVSWLSVPFLNFYRSINKNFLLSSQKLDTFGEHSPIYISSFREAELQGGPRLLLPVGLNDIVVPVYDDEPTSMIAYALMSPEYQRQTSAEGESLVSYPSELNIPRPVDDTIFDPSRSNGSVDESILSISSSRSTSLLDPLSYTKALHARVSYGEDGTLGKVKYTVTCYYAKRFEALRGICLPSELEYIRSLSRCKKWGAQGGKSNVFFAKTLDDRFIIKQVTKTELESFIKFAPAYFKYLSESISTKSPTCLAKILGIYQVATKQLKSGKETKMDVLIMENLLFGRTVKRLYDLKGSSRARYNPDSSGSNKVLLDQNLIEAMPTSPIFVGNKAKRLLERAVWNDTAFLALGDVMDYSLLVGVDEEKNELVLGIIDFLRQYTWDKHLESWVKFTGILGGPKNEAPTVISPKQYKRRFRKAMTTYFLMVPDQWSPPNVVANNSKSDQPEETSQAGTQAE</sequence>
<name>FAB1B_ARATH</name>
<keyword id="KW-0067">ATP-binding</keyword>
<keyword id="KW-0175">Coiled coil</keyword>
<keyword id="KW-0967">Endosome</keyword>
<keyword id="KW-0418">Kinase</keyword>
<keyword id="KW-0472">Membrane</keyword>
<keyword id="KW-0479">Metal-binding</keyword>
<keyword id="KW-0547">Nucleotide-binding</keyword>
<keyword id="KW-1185">Reference proteome</keyword>
<keyword id="KW-0808">Transferase</keyword>
<keyword id="KW-0862">Zinc</keyword>
<keyword id="KW-0863">Zinc-finger</keyword>
<accession>Q9LUM0</accession>
<accession>Q0WPY8</accession>
<evidence type="ECO:0000250" key="1"/>
<evidence type="ECO:0000255" key="2"/>
<evidence type="ECO:0000255" key="3">
    <source>
        <dbReference type="PROSITE-ProRule" id="PRU00091"/>
    </source>
</evidence>
<evidence type="ECO:0000255" key="4">
    <source>
        <dbReference type="PROSITE-ProRule" id="PRU00781"/>
    </source>
</evidence>
<evidence type="ECO:0000256" key="5">
    <source>
        <dbReference type="SAM" id="MobiDB-lite"/>
    </source>
</evidence>
<evidence type="ECO:0000269" key="6">
    <source>
    </source>
</evidence>
<evidence type="ECO:0000269" key="7">
    <source>
    </source>
</evidence>
<evidence type="ECO:0000269" key="8">
    <source>
    </source>
</evidence>
<evidence type="ECO:0000305" key="9">
    <source>
    </source>
</evidence>